<protein>
    <recommendedName>
        <fullName>Guanine nucleotide-binding protein subunit gamma</fullName>
    </recommendedName>
</protein>
<sequence>MTSVQNSPRLQQPQEQQQQQQQLSLKIKQLKLKRINELNNKLRKELSRERITASNACLTIINYTSNTKDYTLPELWGYPVAGSNHFIEGLKNAQKNSQMSNSNSVCCTLM</sequence>
<proteinExistence type="evidence at protein level"/>
<comment type="function">
    <text>Implicated in the pheromone A- and alpha-factor response pathway. The beta and gamma chains of the putative yeast mating response pathway G protein play a positive role in initiation of the mating response.</text>
</comment>
<comment type="subunit">
    <text evidence="3">G proteins are composed of 3 units, alpha, beta and gamma. The beta-gamma subunit complex (STE4-STE18 complex) interacts with PLP1 and PLP2.</text>
</comment>
<comment type="interaction">
    <interactant intactId="EBI-7397">
        <id>P18852</id>
    </interactant>
    <interactant intactId="EBI-7390">
        <id>P18851</id>
        <label>STE4</label>
    </interactant>
    <organismsDiffer>false</organismsDiffer>
    <experiments>4</experiments>
</comment>
<comment type="subcellular location">
    <subcellularLocation>
        <location>Membrane</location>
        <topology>Lipid-anchor</topology>
    </subcellularLocation>
</comment>
<comment type="miscellaneous">
    <text evidence="4">Present with 5550 molecules/cell in log phase SD medium.</text>
</comment>
<comment type="similarity">
    <text evidence="6">Belongs to the G protein gamma family.</text>
</comment>
<feature type="chain" id="PRO_0000194812" description="Guanine nucleotide-binding protein subunit gamma">
    <location>
        <begin position="1"/>
        <end position="107"/>
    </location>
</feature>
<feature type="propeptide" id="PRO_0000396775" description="Removed in mature form">
    <location>
        <begin position="108"/>
        <end position="110"/>
    </location>
</feature>
<feature type="modified residue" description="Cysteine methyl ester" evidence="1">
    <location>
        <position position="107"/>
    </location>
</feature>
<feature type="lipid moiety-binding region" description="S-palmitoyl cysteine" evidence="1 2">
    <location>
        <position position="106"/>
    </location>
</feature>
<feature type="lipid moiety-binding region" description="S-farnesyl cysteine" evidence="1 2">
    <location>
        <position position="107"/>
    </location>
</feature>
<feature type="mutagenesis site" description="Partial loss of function." evidence="1">
    <original>C</original>
    <variation>S</variation>
    <location>
        <position position="106"/>
    </location>
</feature>
<feature type="mutagenesis site" description="Loss of function." evidence="5">
    <original>C</original>
    <variation>X</variation>
    <location>
        <position position="107"/>
    </location>
</feature>
<feature type="helix" evidence="7">
    <location>
        <begin position="53"/>
        <end position="65"/>
    </location>
</feature>
<reference key="1">
    <citation type="journal article" date="1989" name="Cell">
        <title>The STE4 and STE18 genes of yeast encode potential beta and gamma subunits of the mating factor receptor-coupled G protein.</title>
        <authorList>
            <person name="Whiteway M."/>
            <person name="Hougan L."/>
            <person name="Dignard D."/>
            <person name="Thomas D.Y."/>
            <person name="Bell L."/>
            <person name="Saari G.C."/>
            <person name="Grant F.J."/>
            <person name="O'Hara P."/>
            <person name="Mackay V.L."/>
        </authorList>
    </citation>
    <scope>NUCLEOTIDE SEQUENCE [GENOMIC DNA]</scope>
</reference>
<reference key="2">
    <citation type="journal article" date="1996" name="Yeast">
        <title>Analysis of a 62 kb DNA sequence of chromosome X reveals 36 open reading frames and a gene cluster with a counterpart on chromosome XI.</title>
        <authorList>
            <person name="Huang M.-E."/>
            <person name="Manus V."/>
            <person name="Chuat J.-C."/>
            <person name="Galibert F."/>
        </authorList>
    </citation>
    <scope>NUCLEOTIDE SEQUENCE [GENOMIC DNA]</scope>
    <source>
        <strain>ATCC 204508 / S288c</strain>
    </source>
</reference>
<reference key="3">
    <citation type="journal article" date="1996" name="EMBO J.">
        <title>Complete nucleotide sequence of Saccharomyces cerevisiae chromosome X.</title>
        <authorList>
            <person name="Galibert F."/>
            <person name="Alexandraki D."/>
            <person name="Baur A."/>
            <person name="Boles E."/>
            <person name="Chalwatzis N."/>
            <person name="Chuat J.-C."/>
            <person name="Coster F."/>
            <person name="Cziepluch C."/>
            <person name="de Haan M."/>
            <person name="Domdey H."/>
            <person name="Durand P."/>
            <person name="Entian K.-D."/>
            <person name="Gatius M."/>
            <person name="Goffeau A."/>
            <person name="Grivell L.A."/>
            <person name="Hennemann A."/>
            <person name="Herbert C.J."/>
            <person name="Heumann K."/>
            <person name="Hilger F."/>
            <person name="Hollenberg C.P."/>
            <person name="Huang M.-E."/>
            <person name="Jacq C."/>
            <person name="Jauniaux J.-C."/>
            <person name="Katsoulou C."/>
            <person name="Kirchrath L."/>
            <person name="Kleine K."/>
            <person name="Kordes E."/>
            <person name="Koetter P."/>
            <person name="Liebl S."/>
            <person name="Louis E.J."/>
            <person name="Manus V."/>
            <person name="Mewes H.-W."/>
            <person name="Miosga T."/>
            <person name="Obermaier B."/>
            <person name="Perea J."/>
            <person name="Pohl T.M."/>
            <person name="Portetelle D."/>
            <person name="Pujol A."/>
            <person name="Purnelle B."/>
            <person name="Ramezani Rad M."/>
            <person name="Rasmussen S.W."/>
            <person name="Rose M."/>
            <person name="Rossau R."/>
            <person name="Schaaff-Gerstenschlaeger I."/>
            <person name="Smits P.H.M."/>
            <person name="Scarcez T."/>
            <person name="Soriano N."/>
            <person name="To Van D."/>
            <person name="Tzermia M."/>
            <person name="Van Broekhoven A."/>
            <person name="Vandenbol M."/>
            <person name="Wedler H."/>
            <person name="von Wettstein D."/>
            <person name="Wambutt R."/>
            <person name="Zagulski M."/>
            <person name="Zollner A."/>
            <person name="Karpfinger-Hartl L."/>
        </authorList>
    </citation>
    <scope>NUCLEOTIDE SEQUENCE [LARGE SCALE GENOMIC DNA]</scope>
    <source>
        <strain>ATCC 204508 / S288c</strain>
    </source>
</reference>
<reference key="4">
    <citation type="journal article" date="2014" name="G3 (Bethesda)">
        <title>The reference genome sequence of Saccharomyces cerevisiae: Then and now.</title>
        <authorList>
            <person name="Engel S.R."/>
            <person name="Dietrich F.S."/>
            <person name="Fisk D.G."/>
            <person name="Binkley G."/>
            <person name="Balakrishnan R."/>
            <person name="Costanzo M.C."/>
            <person name="Dwight S.S."/>
            <person name="Hitz B.C."/>
            <person name="Karra K."/>
            <person name="Nash R.S."/>
            <person name="Weng S."/>
            <person name="Wong E.D."/>
            <person name="Lloyd P."/>
            <person name="Skrzypek M.S."/>
            <person name="Miyasato S.R."/>
            <person name="Simison M."/>
            <person name="Cherry J.M."/>
        </authorList>
    </citation>
    <scope>GENOME REANNOTATION</scope>
    <source>
        <strain>ATCC 204508 / S288c</strain>
    </source>
</reference>
<reference key="5">
    <citation type="journal article" date="2007" name="Genome Res.">
        <title>Approaching a complete repository of sequence-verified protein-encoding clones for Saccharomyces cerevisiae.</title>
        <authorList>
            <person name="Hu Y."/>
            <person name="Rolfs A."/>
            <person name="Bhullar B."/>
            <person name="Murthy T.V.S."/>
            <person name="Zhu C."/>
            <person name="Berger M.F."/>
            <person name="Camargo A.A."/>
            <person name="Kelley F."/>
            <person name="McCarron S."/>
            <person name="Jepson D."/>
            <person name="Richardson A."/>
            <person name="Raphael J."/>
            <person name="Moreira D."/>
            <person name="Taycher E."/>
            <person name="Zuo D."/>
            <person name="Mohr S."/>
            <person name="Kane M.F."/>
            <person name="Williamson J."/>
            <person name="Simpson A.J.G."/>
            <person name="Bulyk M.L."/>
            <person name="Harlow E."/>
            <person name="Marsischky G."/>
            <person name="Kolodner R.D."/>
            <person name="LaBaer J."/>
        </authorList>
    </citation>
    <scope>NUCLEOTIDE SEQUENCE [GENOMIC DNA]</scope>
    <source>
        <strain>ATCC 204508 / S288c</strain>
    </source>
</reference>
<reference key="6">
    <citation type="journal article" date="1994" name="Genetics">
        <title>Site-directed mutations altering the CAAX box of Ste18, the yeast pheromone-response pathway G gamma subunit.</title>
        <authorList>
            <person name="Whiteway M.S."/>
            <person name="Thomas D.Y."/>
        </authorList>
    </citation>
    <scope>MUTAGENESIS OF CYS-107</scope>
</reference>
<reference key="7">
    <citation type="journal article" date="1999" name="Mol. Cell. Biol.">
        <title>Dual lipid modification of the yeast gamma subunit Ste18p determines membrane localization of Gbetagamma.</title>
        <authorList>
            <person name="Hirschman J.E."/>
            <person name="Jenness D.D."/>
        </authorList>
    </citation>
    <scope>ISOPRENYLATION AT CYS-107</scope>
    <scope>METHYLATION AT CYS-107</scope>
    <scope>PALMITOYLATION AT CYS-106</scope>
    <scope>MUTAGENESIS OF CYS-106</scope>
</reference>
<reference key="8">
    <citation type="journal article" date="2000" name="Mol. Biol. Cell">
        <title>Dual lipid modification motifs in G(alpha) and G(gamma) subunits are required for full activity of the pheromone response pathway in Saccharomyces cerevisiae.</title>
        <authorList>
            <person name="Manahan C.L."/>
            <person name="Patnana M."/>
            <person name="Blumer K.J."/>
            <person name="Linder M.E."/>
        </authorList>
    </citation>
    <scope>ISOPRENYLATION AT CYS-107</scope>
    <scope>PALMITOYLATION AT CYS-106</scope>
</reference>
<reference key="9">
    <citation type="journal article" date="2000" name="J. Biol. Chem.">
        <title>Functional analysis of Plp1 and Plp2, two homologues of phosducin in yeast.</title>
        <authorList>
            <person name="Flanary P.L."/>
            <person name="DiBello P.R."/>
            <person name="Estrada P."/>
            <person name="Dohlman H.G."/>
        </authorList>
    </citation>
    <scope>INTERACTION WITH PLP1 AND PLP2</scope>
</reference>
<reference key="10">
    <citation type="journal article" date="2003" name="Nature">
        <title>Global analysis of protein expression in yeast.</title>
        <authorList>
            <person name="Ghaemmaghami S."/>
            <person name="Huh W.-K."/>
            <person name="Bower K."/>
            <person name="Howson R.W."/>
            <person name="Belle A."/>
            <person name="Dephoure N."/>
            <person name="O'Shea E.K."/>
            <person name="Weissman J.S."/>
        </authorList>
    </citation>
    <scope>LEVEL OF PROTEIN EXPRESSION [LARGE SCALE ANALYSIS]</scope>
</reference>
<reference key="11">
    <citation type="journal article" date="2012" name="Proc. Natl. Acad. Sci. U.S.A.">
        <title>N-terminal acetylome analyses and functional insights of the N-terminal acetyltransferase NatB.</title>
        <authorList>
            <person name="Van Damme P."/>
            <person name="Lasa M."/>
            <person name="Polevoda B."/>
            <person name="Gazquez C."/>
            <person name="Elosegui-Artola A."/>
            <person name="Kim D.S."/>
            <person name="De Juan-Pardo E."/>
            <person name="Demeyer K."/>
            <person name="Hole K."/>
            <person name="Larrea E."/>
            <person name="Timmerman E."/>
            <person name="Prieto J."/>
            <person name="Arnesen T."/>
            <person name="Sherman F."/>
            <person name="Gevaert K."/>
            <person name="Aldabe R."/>
        </authorList>
    </citation>
    <scope>IDENTIFICATION BY MASS SPECTROMETRY [LARGE SCALE ANALYSIS]</scope>
</reference>
<name>GBG_YEAST</name>
<accession>P18852</accession>
<accession>D6VWQ5</accession>
<evidence type="ECO:0000269" key="1">
    <source>
    </source>
</evidence>
<evidence type="ECO:0000269" key="2">
    <source>
    </source>
</evidence>
<evidence type="ECO:0000269" key="3">
    <source>
    </source>
</evidence>
<evidence type="ECO:0000269" key="4">
    <source>
    </source>
</evidence>
<evidence type="ECO:0000269" key="5">
    <source>
    </source>
</evidence>
<evidence type="ECO:0000305" key="6"/>
<evidence type="ECO:0007829" key="7">
    <source>
        <dbReference type="PDB" id="7AD3"/>
    </source>
</evidence>
<dbReference type="EMBL" id="M23983">
    <property type="protein sequence ID" value="AAA35110.1"/>
    <property type="molecule type" value="Genomic_DNA"/>
</dbReference>
<dbReference type="EMBL" id="L47993">
    <property type="protein sequence ID" value="AAB39309.1"/>
    <property type="molecule type" value="Genomic_DNA"/>
</dbReference>
<dbReference type="EMBL" id="Z49586">
    <property type="protein sequence ID" value="CAA89613.1"/>
    <property type="molecule type" value="Genomic_DNA"/>
</dbReference>
<dbReference type="EMBL" id="AY557888">
    <property type="protein sequence ID" value="AAS56214.1"/>
    <property type="molecule type" value="Genomic_DNA"/>
</dbReference>
<dbReference type="EMBL" id="BK006943">
    <property type="protein sequence ID" value="DAA08871.1"/>
    <property type="molecule type" value="Genomic_DNA"/>
</dbReference>
<dbReference type="PIR" id="B30102">
    <property type="entry name" value="B30102"/>
</dbReference>
<dbReference type="RefSeq" id="NP_012619.1">
    <property type="nucleotide sequence ID" value="NM_001181743.1"/>
</dbReference>
<dbReference type="PDB" id="7AD3">
    <property type="method" value="EM"/>
    <property type="resolution" value="3.50 A"/>
    <property type="chains" value="G=2-110"/>
</dbReference>
<dbReference type="PDBsum" id="7AD3"/>
<dbReference type="SMR" id="P18852"/>
<dbReference type="BioGRID" id="33841">
    <property type="interactions" value="19"/>
</dbReference>
<dbReference type="ComplexPortal" id="CPX-1645">
    <property type="entry name" value="Ste4-Ste18 heterodimer"/>
</dbReference>
<dbReference type="ComplexPortal" id="CPX-1646">
    <property type="entry name" value="G protein heterotrimer"/>
</dbReference>
<dbReference type="ComplexPortal" id="CPX-977">
    <property type="entry name" value="CDC24-FAR1-Gbetagamma complex"/>
</dbReference>
<dbReference type="DIP" id="DIP-314N"/>
<dbReference type="FunCoup" id="P18852">
    <property type="interactions" value="157"/>
</dbReference>
<dbReference type="IntAct" id="P18852">
    <property type="interactions" value="5"/>
</dbReference>
<dbReference type="MINT" id="P18852"/>
<dbReference type="STRING" id="4932.YJR086W"/>
<dbReference type="iPTMnet" id="P18852"/>
<dbReference type="SwissPalm" id="P18852"/>
<dbReference type="PaxDb" id="4932-YJR086W"/>
<dbReference type="PeptideAtlas" id="P18852"/>
<dbReference type="DNASU" id="853548"/>
<dbReference type="EnsemblFungi" id="YJR086W_mRNA">
    <property type="protein sequence ID" value="YJR086W"/>
    <property type="gene ID" value="YJR086W"/>
</dbReference>
<dbReference type="GeneID" id="853548"/>
<dbReference type="KEGG" id="sce:YJR086W"/>
<dbReference type="AGR" id="SGD:S000003846"/>
<dbReference type="SGD" id="S000003846">
    <property type="gene designation" value="STE18"/>
</dbReference>
<dbReference type="VEuPathDB" id="FungiDB:YJR086W"/>
<dbReference type="eggNOG" id="ENOG502S5Z5">
    <property type="taxonomic scope" value="Eukaryota"/>
</dbReference>
<dbReference type="HOGENOM" id="CLU_163540_0_0_1"/>
<dbReference type="InParanoid" id="P18852"/>
<dbReference type="OMA" id="CLTIINY"/>
<dbReference type="OrthoDB" id="19232at2759"/>
<dbReference type="BioCyc" id="YEAST:G3O-31714-MONOMER"/>
<dbReference type="BioGRID-ORCS" id="853548">
    <property type="hits" value="0 hits in 10 CRISPR screens"/>
</dbReference>
<dbReference type="ChiTaRS" id="STE18">
    <property type="organism name" value="yeast"/>
</dbReference>
<dbReference type="PRO" id="PR:P18852"/>
<dbReference type="Proteomes" id="UP000002311">
    <property type="component" value="Chromosome X"/>
</dbReference>
<dbReference type="RNAct" id="P18852">
    <property type="molecule type" value="protein"/>
</dbReference>
<dbReference type="GO" id="GO:0120171">
    <property type="term" value="C:Cdc24p-Far1p-Gbetagamma complex"/>
    <property type="evidence" value="ECO:0000314"/>
    <property type="project" value="SGD"/>
</dbReference>
<dbReference type="GO" id="GO:0005938">
    <property type="term" value="C:cell cortex"/>
    <property type="evidence" value="ECO:0000303"/>
    <property type="project" value="ComplexPortal"/>
</dbReference>
<dbReference type="GO" id="GO:0071944">
    <property type="term" value="C:cell periphery"/>
    <property type="evidence" value="ECO:0007005"/>
    <property type="project" value="SGD"/>
</dbReference>
<dbReference type="GO" id="GO:0005737">
    <property type="term" value="C:cytoplasm"/>
    <property type="evidence" value="ECO:0000314"/>
    <property type="project" value="SGD"/>
</dbReference>
<dbReference type="GO" id="GO:0031680">
    <property type="term" value="C:G-protein beta/gamma-subunit complex"/>
    <property type="evidence" value="ECO:0000314"/>
    <property type="project" value="SGD"/>
</dbReference>
<dbReference type="GO" id="GO:0005834">
    <property type="term" value="C:heterotrimeric G-protein complex"/>
    <property type="evidence" value="ECO:0000314"/>
    <property type="project" value="SGD"/>
</dbReference>
<dbReference type="GO" id="GO:0005886">
    <property type="term" value="C:plasma membrane"/>
    <property type="evidence" value="ECO:0000314"/>
    <property type="project" value="ComplexPortal"/>
</dbReference>
<dbReference type="GO" id="GO:0031681">
    <property type="term" value="F:G-protein beta-subunit binding"/>
    <property type="evidence" value="ECO:0000353"/>
    <property type="project" value="SGD"/>
</dbReference>
<dbReference type="GO" id="GO:0007186">
    <property type="term" value="P:G protein-coupled receptor signaling pathway"/>
    <property type="evidence" value="ECO:0000318"/>
    <property type="project" value="GO_Central"/>
</dbReference>
<dbReference type="GO" id="GO:0000750">
    <property type="term" value="P:pheromone-dependent signal transduction involved in conjugation with cellular fusion"/>
    <property type="evidence" value="ECO:0000314"/>
    <property type="project" value="ComplexPortal"/>
</dbReference>
<dbReference type="GO" id="GO:0010969">
    <property type="term" value="P:regulation of pheromone-dependent signal transduction involved in conjugation with cellular fusion"/>
    <property type="evidence" value="ECO:0000303"/>
    <property type="project" value="ComplexPortal"/>
</dbReference>
<dbReference type="CDD" id="cd00068">
    <property type="entry name" value="GGL"/>
    <property type="match status" value="1"/>
</dbReference>
<dbReference type="FunFam" id="4.10.260.10:FF:000008">
    <property type="entry name" value="G protein gamma subunit"/>
    <property type="match status" value="1"/>
</dbReference>
<dbReference type="Gene3D" id="4.10.260.10">
    <property type="entry name" value="Transducin (heterotrimeric G protein), gamma chain"/>
    <property type="match status" value="1"/>
</dbReference>
<dbReference type="InterPro" id="IPR015898">
    <property type="entry name" value="G-protein_gamma-like_dom"/>
</dbReference>
<dbReference type="InterPro" id="IPR036284">
    <property type="entry name" value="GGL_sf"/>
</dbReference>
<dbReference type="InterPro" id="IPR041848">
    <property type="entry name" value="Ste18_fungal"/>
</dbReference>
<dbReference type="PANTHER" id="PTHR28189">
    <property type="entry name" value="GUANINE NUCLEOTIDE-BINDING PROTEIN SUBUNIT GAMMA"/>
    <property type="match status" value="1"/>
</dbReference>
<dbReference type="PANTHER" id="PTHR28189:SF1">
    <property type="entry name" value="GUANINE NUCLEOTIDE-BINDING PROTEIN SUBUNIT GAMMA"/>
    <property type="match status" value="1"/>
</dbReference>
<dbReference type="Pfam" id="PF00631">
    <property type="entry name" value="G-gamma"/>
    <property type="match status" value="1"/>
</dbReference>
<dbReference type="SMART" id="SM01224">
    <property type="entry name" value="G_gamma"/>
    <property type="match status" value="1"/>
</dbReference>
<dbReference type="SMART" id="SM00224">
    <property type="entry name" value="GGL"/>
    <property type="match status" value="1"/>
</dbReference>
<organism>
    <name type="scientific">Saccharomyces cerevisiae (strain ATCC 204508 / S288c)</name>
    <name type="common">Baker's yeast</name>
    <dbReference type="NCBI Taxonomy" id="559292"/>
    <lineage>
        <taxon>Eukaryota</taxon>
        <taxon>Fungi</taxon>
        <taxon>Dikarya</taxon>
        <taxon>Ascomycota</taxon>
        <taxon>Saccharomycotina</taxon>
        <taxon>Saccharomycetes</taxon>
        <taxon>Saccharomycetales</taxon>
        <taxon>Saccharomycetaceae</taxon>
        <taxon>Saccharomyces</taxon>
    </lineage>
</organism>
<keyword id="KW-0002">3D-structure</keyword>
<keyword id="KW-0449">Lipoprotein</keyword>
<keyword id="KW-0472">Membrane</keyword>
<keyword id="KW-0488">Methylation</keyword>
<keyword id="KW-0564">Palmitate</keyword>
<keyword id="KW-0589">Pheromone response</keyword>
<keyword id="KW-0636">Prenylation</keyword>
<keyword id="KW-1185">Reference proteome</keyword>
<keyword id="KW-0807">Transducer</keyword>
<gene>
    <name type="primary">STE18</name>
    <name type="ordered locus">YJR086W</name>
    <name type="ORF">J1866</name>
</gene>